<evidence type="ECO:0000250" key="1"/>
<evidence type="ECO:0000255" key="2">
    <source>
        <dbReference type="HAMAP-Rule" id="MF_01608"/>
    </source>
</evidence>
<name>CDR_STAAW</name>
<keyword id="KW-0274">FAD</keyword>
<keyword id="KW-0285">Flavoprotein</keyword>
<keyword id="KW-0521">NADP</keyword>
<keyword id="KW-0560">Oxidoreductase</keyword>
<keyword id="KW-0676">Redox-active center</keyword>
<dbReference type="EC" id="1.8.1.14" evidence="2"/>
<dbReference type="EMBL" id="BA000033">
    <property type="protein sequence ID" value="BAB94717.1"/>
    <property type="molecule type" value="Genomic_DNA"/>
</dbReference>
<dbReference type="RefSeq" id="WP_001124511.1">
    <property type="nucleotide sequence ID" value="NC_003923.1"/>
</dbReference>
<dbReference type="SMR" id="Q8NXE8"/>
<dbReference type="KEGG" id="sam:MW0852"/>
<dbReference type="HOGENOM" id="CLU_003291_1_3_9"/>
<dbReference type="GO" id="GO:0050451">
    <property type="term" value="F:CoA-disulfide reductase (NADPH) activity"/>
    <property type="evidence" value="ECO:0007669"/>
    <property type="project" value="UniProtKB-UniRule"/>
</dbReference>
<dbReference type="GO" id="GO:0050660">
    <property type="term" value="F:flavin adenine dinucleotide binding"/>
    <property type="evidence" value="ECO:0007669"/>
    <property type="project" value="UniProtKB-UniRule"/>
</dbReference>
<dbReference type="GO" id="GO:0050661">
    <property type="term" value="F:NADP binding"/>
    <property type="evidence" value="ECO:0007669"/>
    <property type="project" value="UniProtKB-UniRule"/>
</dbReference>
<dbReference type="GO" id="GO:0003756">
    <property type="term" value="F:protein disulfide isomerase activity"/>
    <property type="evidence" value="ECO:0007669"/>
    <property type="project" value="UniProtKB-UniRule"/>
</dbReference>
<dbReference type="Gene3D" id="3.30.390.30">
    <property type="match status" value="1"/>
</dbReference>
<dbReference type="Gene3D" id="3.50.50.60">
    <property type="entry name" value="FAD/NAD(P)-binding domain"/>
    <property type="match status" value="2"/>
</dbReference>
<dbReference type="HAMAP" id="MF_01608">
    <property type="entry name" value="CoA_diS_reduct"/>
    <property type="match status" value="1"/>
</dbReference>
<dbReference type="InterPro" id="IPR017758">
    <property type="entry name" value="CoA_disulphide_reductase"/>
</dbReference>
<dbReference type="InterPro" id="IPR023536">
    <property type="entry name" value="CoA_disulphide_reductase_staph"/>
</dbReference>
<dbReference type="InterPro" id="IPR050260">
    <property type="entry name" value="FAD-bd_OxRdtase"/>
</dbReference>
<dbReference type="InterPro" id="IPR036188">
    <property type="entry name" value="FAD/NAD-bd_sf"/>
</dbReference>
<dbReference type="InterPro" id="IPR023753">
    <property type="entry name" value="FAD/NAD-binding_dom"/>
</dbReference>
<dbReference type="InterPro" id="IPR016156">
    <property type="entry name" value="FAD/NAD-linked_Rdtase_dimer_sf"/>
</dbReference>
<dbReference type="InterPro" id="IPR004099">
    <property type="entry name" value="Pyr_nucl-diS_OxRdtase_dimer"/>
</dbReference>
<dbReference type="NCBIfam" id="TIGR03385">
    <property type="entry name" value="CoA_CoA_reduc"/>
    <property type="match status" value="1"/>
</dbReference>
<dbReference type="NCBIfam" id="NF010037">
    <property type="entry name" value="PRK13512.1"/>
    <property type="match status" value="1"/>
</dbReference>
<dbReference type="PANTHER" id="PTHR43429:SF1">
    <property type="entry name" value="NAD(P)H SULFUR OXIDOREDUCTASE (COA-DEPENDENT)"/>
    <property type="match status" value="1"/>
</dbReference>
<dbReference type="PANTHER" id="PTHR43429">
    <property type="entry name" value="PYRIDINE NUCLEOTIDE-DISULFIDE OXIDOREDUCTASE DOMAIN-CONTAINING"/>
    <property type="match status" value="1"/>
</dbReference>
<dbReference type="Pfam" id="PF07992">
    <property type="entry name" value="Pyr_redox_2"/>
    <property type="match status" value="1"/>
</dbReference>
<dbReference type="Pfam" id="PF02852">
    <property type="entry name" value="Pyr_redox_dim"/>
    <property type="match status" value="1"/>
</dbReference>
<dbReference type="PRINTS" id="PR00368">
    <property type="entry name" value="FADPNR"/>
</dbReference>
<dbReference type="PRINTS" id="PR00411">
    <property type="entry name" value="PNDRDTASEI"/>
</dbReference>
<dbReference type="SUPFAM" id="SSF51905">
    <property type="entry name" value="FAD/NAD(P)-binding domain"/>
    <property type="match status" value="1"/>
</dbReference>
<dbReference type="SUPFAM" id="SSF55424">
    <property type="entry name" value="FAD/NAD-linked reductases, dimerisation (C-terminal) domain"/>
    <property type="match status" value="1"/>
</dbReference>
<feature type="initiator methionine" description="Removed" evidence="1">
    <location>
        <position position="1"/>
    </location>
</feature>
<feature type="chain" id="PRO_0000184694" description="Coenzyme A disulfide reductase">
    <location>
        <begin position="2"/>
        <end position="438"/>
    </location>
</feature>
<feature type="active site" description="Nucleophile" evidence="2">
    <location>
        <position position="43"/>
    </location>
</feature>
<feature type="active site" description="Redox-active" evidence="2">
    <location>
        <position position="43"/>
    </location>
</feature>
<feature type="binding site" evidence="2">
    <location>
        <begin position="8"/>
        <end position="33"/>
    </location>
    <ligand>
        <name>FAD</name>
        <dbReference type="ChEBI" id="CHEBI:57692"/>
    </ligand>
</feature>
<feature type="binding site" evidence="2">
    <location>
        <position position="15"/>
    </location>
    <ligand>
        <name>substrate</name>
    </ligand>
</feature>
<feature type="binding site" evidence="2">
    <location>
        <position position="19"/>
    </location>
    <ligand>
        <name>substrate</name>
    </ligand>
</feature>
<feature type="binding site" evidence="2">
    <location>
        <position position="22"/>
    </location>
    <ligand>
        <name>substrate</name>
    </ligand>
</feature>
<feature type="binding site" evidence="2">
    <location>
        <position position="39"/>
    </location>
    <ligand>
        <name>substrate</name>
    </ligand>
</feature>
<feature type="binding site" evidence="2">
    <location>
        <position position="42"/>
    </location>
    <ligand>
        <name>substrate</name>
    </ligand>
</feature>
<feature type="binding site" evidence="2">
    <location>
        <position position="71"/>
    </location>
    <ligand>
        <name>substrate</name>
    </ligand>
</feature>
<feature type="binding site" evidence="2">
    <location>
        <begin position="151"/>
        <end position="166"/>
    </location>
    <ligand>
        <name>NADP(+)</name>
        <dbReference type="ChEBI" id="CHEBI:58349"/>
    </ligand>
</feature>
<feature type="binding site" evidence="2">
    <location>
        <begin position="267"/>
        <end position="277"/>
    </location>
    <ligand>
        <name>FAD</name>
        <dbReference type="ChEBI" id="CHEBI:57692"/>
    </ligand>
</feature>
<feature type="binding site" evidence="2">
    <location>
        <position position="299"/>
    </location>
    <ligand>
        <name>substrate</name>
    </ligand>
</feature>
<feature type="binding site" evidence="2">
    <location>
        <position position="419"/>
    </location>
    <ligand>
        <name>FAD</name>
        <dbReference type="ChEBI" id="CHEBI:57692"/>
    </ligand>
</feature>
<feature type="binding site" evidence="2">
    <location>
        <position position="427"/>
    </location>
    <ligand>
        <name>substrate</name>
    </ligand>
</feature>
<proteinExistence type="inferred from homology"/>
<comment type="function">
    <text evidence="2">Catalyzes specifically the NADPH-dependent reduction of coenzyme A disulfide.</text>
</comment>
<comment type="catalytic activity">
    <reaction evidence="2">
        <text>NADP(+) + 2 CoA = CoA-disulfide + NADPH + H(+)</text>
        <dbReference type="Rhea" id="RHEA:14705"/>
        <dbReference type="ChEBI" id="CHEBI:15378"/>
        <dbReference type="ChEBI" id="CHEBI:57287"/>
        <dbReference type="ChEBI" id="CHEBI:57783"/>
        <dbReference type="ChEBI" id="CHEBI:58349"/>
        <dbReference type="ChEBI" id="CHEBI:62209"/>
        <dbReference type="EC" id="1.8.1.14"/>
    </reaction>
</comment>
<comment type="cofactor">
    <cofactor evidence="2">
        <name>FAD</name>
        <dbReference type="ChEBI" id="CHEBI:57692"/>
    </cofactor>
    <text evidence="2">Binds 1 FAD per subunit.</text>
</comment>
<comment type="subunit">
    <text evidence="2">Homodimer.</text>
</comment>
<comment type="domain">
    <text evidence="2">Contains 2 FAD binding domains and a single NADPH binding domain.</text>
</comment>
<comment type="miscellaneous">
    <text evidence="2">Reduction of disulfides occurs by a thiol-disulfide exchange reaction, but involves only a single catalytic cysteine residue that forms a stable mixed disulfide with CoA during catalysis.</text>
</comment>
<comment type="similarity">
    <text evidence="2">Belongs to the class-III pyridine nucleotide-disulfide oxidoreductase family.</text>
</comment>
<reference key="1">
    <citation type="journal article" date="2002" name="Lancet">
        <title>Genome and virulence determinants of high virulence community-acquired MRSA.</title>
        <authorList>
            <person name="Baba T."/>
            <person name="Takeuchi F."/>
            <person name="Kuroda M."/>
            <person name="Yuzawa H."/>
            <person name="Aoki K."/>
            <person name="Oguchi A."/>
            <person name="Nagai Y."/>
            <person name="Iwama N."/>
            <person name="Asano K."/>
            <person name="Naimi T."/>
            <person name="Kuroda H."/>
            <person name="Cui L."/>
            <person name="Yamamoto K."/>
            <person name="Hiramatsu K."/>
        </authorList>
    </citation>
    <scope>NUCLEOTIDE SEQUENCE [LARGE SCALE GENOMIC DNA]</scope>
    <source>
        <strain>MW2</strain>
    </source>
</reference>
<sequence length="438" mass="49277">MPKIVVVGAVAGGATCASQIRRLDKESDIIIFEKDRDMSFANCALPYVIGEVVEDRKYALAYTPEKFYDRKQITVKTYHEVIAINDERQTVTVLNRKTNEQFEESYDKLILSPGASANSLGFESDITFTLRNLEDTDAIDQFIKANQVDKVLVVGAGYVSLEVLENLYERGLHPTLIHRSDKINKLMDADMNQPILDELDKREIPYRLNEEIDAINGNEITFKSGKVEHYDMIIEGVGTHPNSKFIESSNIKLDRKGFIPVNDKFETNVPNIYAIGDIATSHYRHVDLPASVPLAWGAHRAASIVAEQIAGNDTIEFKGFLGNNIVKFFDYTFASVGVKPNELKQFDYKMVEVTQGAHANYYPGNSPLHLRVYYDTSNRQILRAAAVGKEGADKRIDVLSMAMMNQLTVDELTEFEVAYAPPYSHPKDLINMIGYKAK</sequence>
<organism>
    <name type="scientific">Staphylococcus aureus (strain MW2)</name>
    <dbReference type="NCBI Taxonomy" id="196620"/>
    <lineage>
        <taxon>Bacteria</taxon>
        <taxon>Bacillati</taxon>
        <taxon>Bacillota</taxon>
        <taxon>Bacilli</taxon>
        <taxon>Bacillales</taxon>
        <taxon>Staphylococcaceae</taxon>
        <taxon>Staphylococcus</taxon>
    </lineage>
</organism>
<protein>
    <recommendedName>
        <fullName evidence="2">Coenzyme A disulfide reductase</fullName>
        <shortName evidence="2">CoA-disulfide reductase</shortName>
        <shortName evidence="2">CoADR</shortName>
        <ecNumber evidence="2">1.8.1.14</ecNumber>
    </recommendedName>
</protein>
<accession>Q8NXE8</accession>
<gene>
    <name evidence="2" type="primary">cdr</name>
    <name type="ordered locus">MW0852</name>
</gene>